<organism>
    <name type="scientific">Saccharolobus islandicus (strain Y.G.57.14 / Yellowstone #1)</name>
    <name type="common">Sulfolobus islandicus</name>
    <dbReference type="NCBI Taxonomy" id="439386"/>
    <lineage>
        <taxon>Archaea</taxon>
        <taxon>Thermoproteota</taxon>
        <taxon>Thermoprotei</taxon>
        <taxon>Sulfolobales</taxon>
        <taxon>Sulfolobaceae</taxon>
        <taxon>Saccharolobus</taxon>
    </lineage>
</organism>
<keyword id="KW-0238">DNA-binding</keyword>
<proteinExistence type="inferred from homology"/>
<reference key="1">
    <citation type="journal article" date="2009" name="Proc. Natl. Acad. Sci. U.S.A.">
        <title>Biogeography of the Sulfolobus islandicus pan-genome.</title>
        <authorList>
            <person name="Reno M.L."/>
            <person name="Held N.L."/>
            <person name="Fields C.J."/>
            <person name="Burke P.V."/>
            <person name="Whitaker R.J."/>
        </authorList>
    </citation>
    <scope>NUCLEOTIDE SEQUENCE [LARGE SCALE GENOMIC DNA]</scope>
    <source>
        <strain>Y.G.57.14 / Yellowstone #1</strain>
    </source>
</reference>
<feature type="chain" id="PRO_1000201962" description="DNA-binding protein YG5714_1868">
    <location>
        <begin position="1"/>
        <end position="118"/>
    </location>
</feature>
<sequence length="118" mass="13998">MSAPTSYDDEELEELLRRKAAQEQKRLEEERKRKAELESQKESILRVILTPEARQRLTNIKLVKPEFAESLENQLIALAQSGRIKVPITDEELKQILEQISEQNRRDFKIQIRERGWK</sequence>
<evidence type="ECO:0000255" key="1">
    <source>
        <dbReference type="HAMAP-Rule" id="MF_00026"/>
    </source>
</evidence>
<accession>C3N7D0</accession>
<name>Y1868_SACI7</name>
<dbReference type="EMBL" id="CP001403">
    <property type="protein sequence ID" value="ACP46124.1"/>
    <property type="molecule type" value="Genomic_DNA"/>
</dbReference>
<dbReference type="RefSeq" id="WP_012713965.1">
    <property type="nucleotide sequence ID" value="NC_012622.1"/>
</dbReference>
<dbReference type="SMR" id="C3N7D0"/>
<dbReference type="GeneID" id="7807271"/>
<dbReference type="KEGG" id="siy:YG5714_1868"/>
<dbReference type="HOGENOM" id="CLU_122978_3_0_2"/>
<dbReference type="Proteomes" id="UP000002308">
    <property type="component" value="Chromosome"/>
</dbReference>
<dbReference type="GO" id="GO:0005829">
    <property type="term" value="C:cytosol"/>
    <property type="evidence" value="ECO:0007669"/>
    <property type="project" value="TreeGrafter"/>
</dbReference>
<dbReference type="GO" id="GO:0003677">
    <property type="term" value="F:DNA binding"/>
    <property type="evidence" value="ECO:0007669"/>
    <property type="project" value="UniProtKB-UniRule"/>
</dbReference>
<dbReference type="FunFam" id="1.10.8.140:FF:000004">
    <property type="entry name" value="DNA-binding protein PAE3044"/>
    <property type="match status" value="1"/>
</dbReference>
<dbReference type="Gene3D" id="1.10.8.140">
    <property type="entry name" value="PDCD5-like"/>
    <property type="match status" value="1"/>
</dbReference>
<dbReference type="HAMAP" id="MF_00026">
    <property type="entry name" value="dsDNA_bind"/>
    <property type="match status" value="1"/>
</dbReference>
<dbReference type="InterPro" id="IPR022889">
    <property type="entry name" value="DNA_bind_arc"/>
</dbReference>
<dbReference type="InterPro" id="IPR002836">
    <property type="entry name" value="PDCD5-like"/>
</dbReference>
<dbReference type="InterPro" id="IPR036883">
    <property type="entry name" value="PDCD5-like_sf"/>
</dbReference>
<dbReference type="NCBIfam" id="NF003268">
    <property type="entry name" value="PRK04239.1"/>
    <property type="match status" value="1"/>
</dbReference>
<dbReference type="PANTHER" id="PTHR10840">
    <property type="entry name" value="PROGRAMMED CELL DEATH PROTEIN 5"/>
    <property type="match status" value="1"/>
</dbReference>
<dbReference type="PANTHER" id="PTHR10840:SF0">
    <property type="entry name" value="PROGRAMMED CELL DEATH PROTEIN 5"/>
    <property type="match status" value="1"/>
</dbReference>
<dbReference type="Pfam" id="PF01984">
    <property type="entry name" value="dsDNA_bind"/>
    <property type="match status" value="1"/>
</dbReference>
<dbReference type="PIRSF" id="PIRSF015730">
    <property type="entry name" value="TFAR19"/>
    <property type="match status" value="1"/>
</dbReference>
<dbReference type="SUPFAM" id="SSF46950">
    <property type="entry name" value="Double-stranded DNA-binding domain"/>
    <property type="match status" value="1"/>
</dbReference>
<comment type="similarity">
    <text evidence="1">Belongs to the PDCD5 family.</text>
</comment>
<gene>
    <name type="ordered locus">YG5714_1868</name>
</gene>
<protein>
    <recommendedName>
        <fullName evidence="1">DNA-binding protein YG5714_1868</fullName>
    </recommendedName>
</protein>